<protein>
    <recommendedName>
        <fullName evidence="1">GTPase Der</fullName>
    </recommendedName>
    <alternativeName>
        <fullName evidence="1">GTP-binding protein EngA</fullName>
    </alternativeName>
</protein>
<keyword id="KW-0342">GTP-binding</keyword>
<keyword id="KW-0547">Nucleotide-binding</keyword>
<keyword id="KW-1185">Reference proteome</keyword>
<keyword id="KW-0677">Repeat</keyword>
<keyword id="KW-0690">Ribosome biogenesis</keyword>
<feature type="chain" id="PRO_1000204037" description="GTPase Der">
    <location>
        <begin position="1"/>
        <end position="441"/>
    </location>
</feature>
<feature type="domain" description="EngA-type G 1">
    <location>
        <begin position="4"/>
        <end position="169"/>
    </location>
</feature>
<feature type="domain" description="EngA-type G 2">
    <location>
        <begin position="178"/>
        <end position="353"/>
    </location>
</feature>
<feature type="domain" description="KH-like" evidence="1">
    <location>
        <begin position="354"/>
        <end position="438"/>
    </location>
</feature>
<feature type="binding site" evidence="1">
    <location>
        <begin position="10"/>
        <end position="17"/>
    </location>
    <ligand>
        <name>GTP</name>
        <dbReference type="ChEBI" id="CHEBI:37565"/>
        <label>1</label>
    </ligand>
</feature>
<feature type="binding site" evidence="1">
    <location>
        <begin position="57"/>
        <end position="61"/>
    </location>
    <ligand>
        <name>GTP</name>
        <dbReference type="ChEBI" id="CHEBI:37565"/>
        <label>1</label>
    </ligand>
</feature>
<feature type="binding site" evidence="1">
    <location>
        <begin position="120"/>
        <end position="123"/>
    </location>
    <ligand>
        <name>GTP</name>
        <dbReference type="ChEBI" id="CHEBI:37565"/>
        <label>1</label>
    </ligand>
</feature>
<feature type="binding site" evidence="1">
    <location>
        <begin position="184"/>
        <end position="191"/>
    </location>
    <ligand>
        <name>GTP</name>
        <dbReference type="ChEBI" id="CHEBI:37565"/>
        <label>2</label>
    </ligand>
</feature>
<feature type="binding site" evidence="1">
    <location>
        <begin position="231"/>
        <end position="235"/>
    </location>
    <ligand>
        <name>GTP</name>
        <dbReference type="ChEBI" id="CHEBI:37565"/>
        <label>2</label>
    </ligand>
</feature>
<feature type="binding site" evidence="1">
    <location>
        <begin position="296"/>
        <end position="299"/>
    </location>
    <ligand>
        <name>GTP</name>
        <dbReference type="ChEBI" id="CHEBI:37565"/>
        <label>2</label>
    </ligand>
</feature>
<accession>C4Z0C8</accession>
<evidence type="ECO:0000255" key="1">
    <source>
        <dbReference type="HAMAP-Rule" id="MF_00195"/>
    </source>
</evidence>
<dbReference type="EMBL" id="CP001104">
    <property type="protein sequence ID" value="ACR72041.1"/>
    <property type="molecule type" value="Genomic_DNA"/>
</dbReference>
<dbReference type="RefSeq" id="WP_012739276.1">
    <property type="nucleotide sequence ID" value="NC_012778.1"/>
</dbReference>
<dbReference type="SMR" id="C4Z0C8"/>
<dbReference type="STRING" id="515620.EUBELI_01040"/>
<dbReference type="GeneID" id="41355766"/>
<dbReference type="KEGG" id="eel:EUBELI_01040"/>
<dbReference type="eggNOG" id="COG1160">
    <property type="taxonomic scope" value="Bacteria"/>
</dbReference>
<dbReference type="HOGENOM" id="CLU_016077_6_2_9"/>
<dbReference type="Proteomes" id="UP000001476">
    <property type="component" value="Chromosome"/>
</dbReference>
<dbReference type="GO" id="GO:0016887">
    <property type="term" value="F:ATP hydrolysis activity"/>
    <property type="evidence" value="ECO:0007669"/>
    <property type="project" value="InterPro"/>
</dbReference>
<dbReference type="GO" id="GO:0005525">
    <property type="term" value="F:GTP binding"/>
    <property type="evidence" value="ECO:0007669"/>
    <property type="project" value="UniProtKB-UniRule"/>
</dbReference>
<dbReference type="GO" id="GO:0043022">
    <property type="term" value="F:ribosome binding"/>
    <property type="evidence" value="ECO:0007669"/>
    <property type="project" value="TreeGrafter"/>
</dbReference>
<dbReference type="GO" id="GO:0042254">
    <property type="term" value="P:ribosome biogenesis"/>
    <property type="evidence" value="ECO:0007669"/>
    <property type="project" value="UniProtKB-KW"/>
</dbReference>
<dbReference type="CDD" id="cd01894">
    <property type="entry name" value="EngA1"/>
    <property type="match status" value="1"/>
</dbReference>
<dbReference type="CDD" id="cd01895">
    <property type="entry name" value="EngA2"/>
    <property type="match status" value="1"/>
</dbReference>
<dbReference type="FunFam" id="3.30.300.20:FF:000004">
    <property type="entry name" value="GTPase Der"/>
    <property type="match status" value="1"/>
</dbReference>
<dbReference type="FunFam" id="3.40.50.300:FF:000040">
    <property type="entry name" value="GTPase Der"/>
    <property type="match status" value="1"/>
</dbReference>
<dbReference type="FunFam" id="3.40.50.300:FF:000057">
    <property type="entry name" value="GTPase Der"/>
    <property type="match status" value="1"/>
</dbReference>
<dbReference type="Gene3D" id="3.30.300.20">
    <property type="match status" value="1"/>
</dbReference>
<dbReference type="Gene3D" id="3.40.50.300">
    <property type="entry name" value="P-loop containing nucleotide triphosphate hydrolases"/>
    <property type="match status" value="2"/>
</dbReference>
<dbReference type="HAMAP" id="MF_00195">
    <property type="entry name" value="GTPase_Der"/>
    <property type="match status" value="1"/>
</dbReference>
<dbReference type="InterPro" id="IPR003593">
    <property type="entry name" value="AAA+_ATPase"/>
</dbReference>
<dbReference type="InterPro" id="IPR031166">
    <property type="entry name" value="G_ENGA"/>
</dbReference>
<dbReference type="InterPro" id="IPR006073">
    <property type="entry name" value="GTP-bd"/>
</dbReference>
<dbReference type="InterPro" id="IPR016484">
    <property type="entry name" value="GTPase_Der"/>
</dbReference>
<dbReference type="InterPro" id="IPR032859">
    <property type="entry name" value="KH_dom-like"/>
</dbReference>
<dbReference type="InterPro" id="IPR015946">
    <property type="entry name" value="KH_dom-like_a/b"/>
</dbReference>
<dbReference type="InterPro" id="IPR027417">
    <property type="entry name" value="P-loop_NTPase"/>
</dbReference>
<dbReference type="InterPro" id="IPR005225">
    <property type="entry name" value="Small_GTP-bd"/>
</dbReference>
<dbReference type="NCBIfam" id="TIGR03594">
    <property type="entry name" value="GTPase_EngA"/>
    <property type="match status" value="1"/>
</dbReference>
<dbReference type="NCBIfam" id="TIGR00231">
    <property type="entry name" value="small_GTP"/>
    <property type="match status" value="2"/>
</dbReference>
<dbReference type="PANTHER" id="PTHR43834">
    <property type="entry name" value="GTPASE DER"/>
    <property type="match status" value="1"/>
</dbReference>
<dbReference type="PANTHER" id="PTHR43834:SF6">
    <property type="entry name" value="GTPASE DER"/>
    <property type="match status" value="1"/>
</dbReference>
<dbReference type="Pfam" id="PF14714">
    <property type="entry name" value="KH_dom-like"/>
    <property type="match status" value="1"/>
</dbReference>
<dbReference type="Pfam" id="PF01926">
    <property type="entry name" value="MMR_HSR1"/>
    <property type="match status" value="2"/>
</dbReference>
<dbReference type="PIRSF" id="PIRSF006485">
    <property type="entry name" value="GTP-binding_EngA"/>
    <property type="match status" value="1"/>
</dbReference>
<dbReference type="PRINTS" id="PR00326">
    <property type="entry name" value="GTP1OBG"/>
</dbReference>
<dbReference type="SMART" id="SM00382">
    <property type="entry name" value="AAA"/>
    <property type="match status" value="2"/>
</dbReference>
<dbReference type="SUPFAM" id="SSF52540">
    <property type="entry name" value="P-loop containing nucleoside triphosphate hydrolases"/>
    <property type="match status" value="2"/>
</dbReference>
<dbReference type="PROSITE" id="PS51712">
    <property type="entry name" value="G_ENGA"/>
    <property type="match status" value="2"/>
</dbReference>
<organism>
    <name type="scientific">Lachnospira eligens (strain ATCC 27750 / DSM 3376 / VPI C15-48 / C15-B4)</name>
    <name type="common">Eubacterium eligens</name>
    <dbReference type="NCBI Taxonomy" id="515620"/>
    <lineage>
        <taxon>Bacteria</taxon>
        <taxon>Bacillati</taxon>
        <taxon>Bacillota</taxon>
        <taxon>Clostridia</taxon>
        <taxon>Lachnospirales</taxon>
        <taxon>Lachnospiraceae</taxon>
        <taxon>Lachnospira</taxon>
    </lineage>
</organism>
<comment type="function">
    <text evidence="1">GTPase that plays an essential role in the late steps of ribosome biogenesis.</text>
</comment>
<comment type="subunit">
    <text evidence="1">Associates with the 50S ribosomal subunit.</text>
</comment>
<comment type="similarity">
    <text evidence="1">Belongs to the TRAFAC class TrmE-Era-EngA-EngB-Septin-like GTPase superfamily. EngA (Der) GTPase family.</text>
</comment>
<gene>
    <name evidence="1" type="primary">der</name>
    <name type="synonym">engA</name>
    <name type="ordered locus">EUBELI_01040</name>
</gene>
<name>DER_LACE2</name>
<reference key="1">
    <citation type="journal article" date="2009" name="Proc. Natl. Acad. Sci. U.S.A.">
        <title>Characterizing a model human gut microbiota composed of members of its two dominant bacterial phyla.</title>
        <authorList>
            <person name="Mahowald M.A."/>
            <person name="Rey F.E."/>
            <person name="Seedorf H."/>
            <person name="Turnbaugh P.J."/>
            <person name="Fulton R.S."/>
            <person name="Wollam A."/>
            <person name="Shah N."/>
            <person name="Wang C."/>
            <person name="Magrini V."/>
            <person name="Wilson R.K."/>
            <person name="Cantarel B.L."/>
            <person name="Coutinho P.M."/>
            <person name="Henrissat B."/>
            <person name="Crock L.W."/>
            <person name="Russell A."/>
            <person name="Verberkmoes N.C."/>
            <person name="Hettich R.L."/>
            <person name="Gordon J.I."/>
        </authorList>
    </citation>
    <scope>NUCLEOTIDE SEQUENCE [LARGE SCALE GENOMIC DNA]</scope>
    <source>
        <strain>ATCC 27750 / DSM 3376 / VPI C15-48 / C15-B4</strain>
    </source>
</reference>
<sequence>MSKPIVAVVGRPNVGKSTLFNSLCGQQISIVKDTPGVTRDRIYAEVSWLNHNFTLIDTGGIEPDTGDIILSQMREQAEIAIETADVIIFMTDVKQGLVDSDSKVADMLRRSHKPVILVVNKVDSFEKMMPDVYEFYNLGIGEPFPISAVNKLGFGEVLDEVVSHFPEGSDTDKEDDRPKVAIIGKPNVGKSSIINKLVGKNRVIVSDIAGTTRDAIDTAIKYNGKEYVFIDTAGLRRKSKIKEDLERFSIIRTVAAVERADIAILVIDATEGVTEQDAKIAGIAHERGKGIIIAVNKWDDIEKNDKTIYEFTNKIKDTLAFMSYAEIIFVSAKTGQRLNKIYELVDHIVDAQTMRIPTGVLNEILTEAVAMKQPPSDKGKRLKIYYMTQVSVKPPTFVMFVNDVALTHFSYTRYIENRIRESFGFRGTSIRFINRERKEKE</sequence>
<proteinExistence type="inferred from homology"/>